<name>PSBF_NOSP7</name>
<dbReference type="EMBL" id="CP001037">
    <property type="protein sequence ID" value="ACC83857.1"/>
    <property type="molecule type" value="Genomic_DNA"/>
</dbReference>
<dbReference type="RefSeq" id="WP_012411801.1">
    <property type="nucleotide sequence ID" value="NC_010628.1"/>
</dbReference>
<dbReference type="SMR" id="B2J6T1"/>
<dbReference type="STRING" id="63737.Npun_F5552"/>
<dbReference type="EnsemblBacteria" id="ACC83857">
    <property type="protein sequence ID" value="ACC83857"/>
    <property type="gene ID" value="Npun_F5552"/>
</dbReference>
<dbReference type="KEGG" id="npu:Npun_F5552"/>
<dbReference type="eggNOG" id="ENOG50332KX">
    <property type="taxonomic scope" value="Bacteria"/>
</dbReference>
<dbReference type="HOGENOM" id="CLU_211753_1_0_3"/>
<dbReference type="OrthoDB" id="532613at2"/>
<dbReference type="PhylomeDB" id="B2J6T1"/>
<dbReference type="Proteomes" id="UP000001191">
    <property type="component" value="Chromosome"/>
</dbReference>
<dbReference type="GO" id="GO:0009539">
    <property type="term" value="C:photosystem II reaction center"/>
    <property type="evidence" value="ECO:0007669"/>
    <property type="project" value="InterPro"/>
</dbReference>
<dbReference type="GO" id="GO:0031676">
    <property type="term" value="C:plasma membrane-derived thylakoid membrane"/>
    <property type="evidence" value="ECO:0007669"/>
    <property type="project" value="UniProtKB-SubCell"/>
</dbReference>
<dbReference type="GO" id="GO:0009055">
    <property type="term" value="F:electron transfer activity"/>
    <property type="evidence" value="ECO:0007669"/>
    <property type="project" value="UniProtKB-UniRule"/>
</dbReference>
<dbReference type="GO" id="GO:0020037">
    <property type="term" value="F:heme binding"/>
    <property type="evidence" value="ECO:0007669"/>
    <property type="project" value="InterPro"/>
</dbReference>
<dbReference type="GO" id="GO:0005506">
    <property type="term" value="F:iron ion binding"/>
    <property type="evidence" value="ECO:0007669"/>
    <property type="project" value="UniProtKB-UniRule"/>
</dbReference>
<dbReference type="GO" id="GO:0009767">
    <property type="term" value="P:photosynthetic electron transport chain"/>
    <property type="evidence" value="ECO:0007669"/>
    <property type="project" value="InterPro"/>
</dbReference>
<dbReference type="HAMAP" id="MF_00643">
    <property type="entry name" value="PSII_PsbF"/>
    <property type="match status" value="1"/>
</dbReference>
<dbReference type="InterPro" id="IPR006241">
    <property type="entry name" value="PSII_cyt_b559_bsu"/>
</dbReference>
<dbReference type="InterPro" id="IPR006216">
    <property type="entry name" value="PSII_cyt_b559_CS"/>
</dbReference>
<dbReference type="InterPro" id="IPR013081">
    <property type="entry name" value="PSII_cyt_b559_N"/>
</dbReference>
<dbReference type="NCBIfam" id="TIGR01333">
    <property type="entry name" value="cyt_b559_beta"/>
    <property type="match status" value="1"/>
</dbReference>
<dbReference type="Pfam" id="PF00283">
    <property type="entry name" value="Cytochrom_B559"/>
    <property type="match status" value="1"/>
</dbReference>
<dbReference type="PIRSF" id="PIRSF000037">
    <property type="entry name" value="PsbF"/>
    <property type="match status" value="1"/>
</dbReference>
<dbReference type="SUPFAM" id="SSF161045">
    <property type="entry name" value="Cytochrome b559 subunits"/>
    <property type="match status" value="1"/>
</dbReference>
<dbReference type="PROSITE" id="PS00537">
    <property type="entry name" value="CYTOCHROME_B559"/>
    <property type="match status" value="1"/>
</dbReference>
<accession>B2J6T1</accession>
<sequence>MTSGNNINQPVTYPIFTVRWLAVHTLGVPTVFFLGAIAAMQFIHR</sequence>
<proteinExistence type="inferred from homology"/>
<reference key="1">
    <citation type="journal article" date="2013" name="Plant Physiol.">
        <title>A Nostoc punctiforme Sugar Transporter Necessary to Establish a Cyanobacterium-Plant Symbiosis.</title>
        <authorList>
            <person name="Ekman M."/>
            <person name="Picossi S."/>
            <person name="Campbell E.L."/>
            <person name="Meeks J.C."/>
            <person name="Flores E."/>
        </authorList>
    </citation>
    <scope>NUCLEOTIDE SEQUENCE [LARGE SCALE GENOMIC DNA]</scope>
    <source>
        <strain>ATCC 29133 / PCC 73102</strain>
    </source>
</reference>
<evidence type="ECO:0000255" key="1">
    <source>
        <dbReference type="HAMAP-Rule" id="MF_00643"/>
    </source>
</evidence>
<gene>
    <name evidence="1" type="primary">psbF</name>
    <name type="ordered locus">Npun_F5552</name>
</gene>
<keyword id="KW-0249">Electron transport</keyword>
<keyword id="KW-0349">Heme</keyword>
<keyword id="KW-0408">Iron</keyword>
<keyword id="KW-0472">Membrane</keyword>
<keyword id="KW-0479">Metal-binding</keyword>
<keyword id="KW-0602">Photosynthesis</keyword>
<keyword id="KW-0604">Photosystem II</keyword>
<keyword id="KW-1185">Reference proteome</keyword>
<keyword id="KW-0793">Thylakoid</keyword>
<keyword id="KW-0812">Transmembrane</keyword>
<keyword id="KW-1133">Transmembrane helix</keyword>
<keyword id="KW-0813">Transport</keyword>
<organism>
    <name type="scientific">Nostoc punctiforme (strain ATCC 29133 / PCC 73102)</name>
    <dbReference type="NCBI Taxonomy" id="63737"/>
    <lineage>
        <taxon>Bacteria</taxon>
        <taxon>Bacillati</taxon>
        <taxon>Cyanobacteriota</taxon>
        <taxon>Cyanophyceae</taxon>
        <taxon>Nostocales</taxon>
        <taxon>Nostocaceae</taxon>
        <taxon>Nostoc</taxon>
    </lineage>
</organism>
<protein>
    <recommendedName>
        <fullName evidence="1">Cytochrome b559 subunit beta</fullName>
    </recommendedName>
    <alternativeName>
        <fullName evidence="1">PSII reaction center subunit VI</fullName>
    </alternativeName>
</protein>
<feature type="chain" id="PRO_1000130906" description="Cytochrome b559 subunit beta">
    <location>
        <begin position="1"/>
        <end position="45"/>
    </location>
</feature>
<feature type="transmembrane region" description="Helical" evidence="1">
    <location>
        <begin position="20"/>
        <end position="36"/>
    </location>
</feature>
<feature type="binding site" description="axial binding residue" evidence="1">
    <location>
        <position position="24"/>
    </location>
    <ligand>
        <name>heme</name>
        <dbReference type="ChEBI" id="CHEBI:30413"/>
        <note>ligand shared with alpha subunit</note>
    </ligand>
    <ligandPart>
        <name>Fe</name>
        <dbReference type="ChEBI" id="CHEBI:18248"/>
    </ligandPart>
</feature>
<comment type="function">
    <text evidence="1">This b-type cytochrome is tightly associated with the reaction center of photosystem II (PSII). PSII is a light-driven water:plastoquinone oxidoreductase that uses light energy to abstract electrons from H(2)O, generating O(2) and a proton gradient subsequently used for ATP formation. It consists of a core antenna complex that captures photons, and an electron transfer chain that converts photonic excitation into a charge separation.</text>
</comment>
<comment type="cofactor">
    <cofactor evidence="1">
        <name>heme b</name>
        <dbReference type="ChEBI" id="CHEBI:60344"/>
    </cofactor>
    <text evidence="1">With its partner (PsbE) binds heme. PSII binds additional chlorophylls, carotenoids and specific lipids.</text>
</comment>
<comment type="subunit">
    <text evidence="1">Heterodimer of an alpha subunit and a beta subunit. PSII is composed of 1 copy each of membrane proteins PsbA, PsbB, PsbC, PsbD, PsbE, PsbF, PsbH, PsbI, PsbJ, PsbK, PsbL, PsbM, PsbT, PsbX, PsbY, PsbZ, Psb30/Ycf12, peripheral proteins PsbO, CyanoQ (PsbQ), PsbU, PsbV and a large number of cofactors. It forms dimeric complexes.</text>
</comment>
<comment type="subcellular location">
    <subcellularLocation>
        <location evidence="1">Cellular thylakoid membrane</location>
        <topology evidence="1">Single-pass membrane protein</topology>
    </subcellularLocation>
</comment>
<comment type="similarity">
    <text evidence="1">Belongs to the PsbE/PsbF family.</text>
</comment>